<proteinExistence type="evidence at protein level"/>
<feature type="signal peptide" evidence="1">
    <location>
        <begin position="1"/>
        <end position="19"/>
    </location>
</feature>
<feature type="chain" id="PRO_0000031684" description="Sulfate-binding protein">
    <location>
        <begin position="20"/>
        <end position="329"/>
    </location>
</feature>
<feature type="sequence conflict" description="In Ref. 2; AA sequence." evidence="2" ref="2">
    <original>R</original>
    <variation>D</variation>
    <location>
        <position position="58"/>
    </location>
</feature>
<feature type="sequence conflict" description="In Ref. 2; AA sequence." evidence="2" ref="2">
    <original>GS</original>
    <variation>SQ</variation>
    <location>
        <begin position="63"/>
        <end position="64"/>
    </location>
</feature>
<feature type="sequence conflict" description="In Ref. 2; AA sequence." evidence="2" ref="2">
    <original>S</original>
    <variation>SS</variation>
    <location>
        <position position="70"/>
    </location>
</feature>
<feature type="sequence conflict" description="In Ref. 2; AA sequence." evidence="2" ref="2">
    <original>V</original>
    <variation>T</variation>
    <location>
        <position position="79"/>
    </location>
</feature>
<feature type="sequence conflict" description="In Ref. 2; AA sequence." evidence="2" ref="2">
    <original>D</original>
    <variation>N</variation>
    <location>
        <position position="89"/>
    </location>
</feature>
<feature type="sequence conflict" description="In Ref. 2; AA sequence." evidence="2" ref="2">
    <original>H</original>
    <variation>T</variation>
    <location>
        <position position="129"/>
    </location>
</feature>
<feature type="sequence conflict" description="In Ref. 2; AA sequence." evidence="2" ref="2">
    <original>Q</original>
    <variation>E</variation>
    <location>
        <position position="175"/>
    </location>
</feature>
<feature type="sequence conflict" description="In Ref. 2; AA sequence." evidence="2" ref="2">
    <location>
        <position position="249"/>
    </location>
</feature>
<feature type="sequence conflict" description="In Ref. 2; AA sequence." evidence="2" ref="2">
    <original>N</original>
    <variation>D</variation>
    <location>
        <position position="319"/>
    </location>
</feature>
<feature type="strand" evidence="3">
    <location>
        <begin position="21"/>
        <end position="28"/>
    </location>
</feature>
<feature type="helix" evidence="3">
    <location>
        <begin position="33"/>
        <end position="51"/>
    </location>
</feature>
<feature type="strand" evidence="3">
    <location>
        <begin position="54"/>
        <end position="62"/>
    </location>
</feature>
<feature type="helix" evidence="3">
    <location>
        <begin position="64"/>
        <end position="72"/>
    </location>
</feature>
<feature type="strand" evidence="3">
    <location>
        <begin position="78"/>
        <end position="84"/>
    </location>
</feature>
<feature type="helix" evidence="3">
    <location>
        <begin position="85"/>
        <end position="93"/>
    </location>
</feature>
<feature type="helix" evidence="3">
    <location>
        <begin position="101"/>
        <end position="104"/>
    </location>
</feature>
<feature type="helix" evidence="3">
    <location>
        <begin position="106"/>
        <end position="109"/>
    </location>
</feature>
<feature type="strand" evidence="3">
    <location>
        <begin position="111"/>
        <end position="114"/>
    </location>
</feature>
<feature type="strand" evidence="3">
    <location>
        <begin position="116"/>
        <end position="121"/>
    </location>
</feature>
<feature type="helix" evidence="3">
    <location>
        <begin position="131"/>
        <end position="135"/>
    </location>
</feature>
<feature type="turn" evidence="3">
    <location>
        <begin position="146"/>
        <end position="148"/>
    </location>
</feature>
<feature type="helix" evidence="3">
    <location>
        <begin position="150"/>
        <end position="166"/>
    </location>
</feature>
<feature type="turn" evidence="3">
    <location>
        <begin position="167"/>
        <end position="169"/>
    </location>
</feature>
<feature type="helix" evidence="3">
    <location>
        <begin position="171"/>
        <end position="183"/>
    </location>
</feature>
<feature type="strand" evidence="3">
    <location>
        <begin position="185"/>
        <end position="187"/>
    </location>
</feature>
<feature type="helix" evidence="3">
    <location>
        <begin position="192"/>
        <end position="200"/>
    </location>
</feature>
<feature type="strand" evidence="3">
    <location>
        <begin position="206"/>
        <end position="211"/>
    </location>
</feature>
<feature type="helix" evidence="3">
    <location>
        <begin position="212"/>
        <end position="220"/>
    </location>
</feature>
<feature type="turn" evidence="3">
    <location>
        <begin position="221"/>
        <end position="226"/>
    </location>
</feature>
<feature type="strand" evidence="3">
    <location>
        <begin position="227"/>
        <end position="230"/>
    </location>
</feature>
<feature type="strand" evidence="3">
    <location>
        <begin position="233"/>
        <end position="236"/>
    </location>
</feature>
<feature type="strand" evidence="3">
    <location>
        <begin position="241"/>
        <end position="244"/>
    </location>
</feature>
<feature type="helix" evidence="3">
    <location>
        <begin position="246"/>
        <end position="252"/>
    </location>
</feature>
<feature type="helix" evidence="3">
    <location>
        <begin position="255"/>
        <end position="263"/>
    </location>
</feature>
<feature type="helix" evidence="3">
    <location>
        <begin position="264"/>
        <end position="266"/>
    </location>
</feature>
<feature type="helix" evidence="3">
    <location>
        <begin position="268"/>
        <end position="276"/>
    </location>
</feature>
<feature type="strand" evidence="3">
    <location>
        <begin position="280"/>
        <end position="282"/>
    </location>
</feature>
<feature type="helix" evidence="3">
    <location>
        <begin position="284"/>
        <end position="289"/>
    </location>
</feature>
<feature type="helix" evidence="3">
    <location>
        <begin position="291"/>
        <end position="293"/>
    </location>
</feature>
<feature type="strand" evidence="3">
    <location>
        <begin position="298"/>
        <end position="300"/>
    </location>
</feature>
<feature type="helix" evidence="3">
    <location>
        <begin position="302"/>
        <end position="306"/>
    </location>
</feature>
<feature type="helix" evidence="3">
    <location>
        <begin position="309"/>
        <end position="316"/>
    </location>
</feature>
<feature type="helix" evidence="3">
    <location>
        <begin position="322"/>
        <end position="327"/>
    </location>
</feature>
<dbReference type="EMBL" id="AE006468">
    <property type="protein sequence ID" value="AAL22903.1"/>
    <property type="molecule type" value="Genomic_DNA"/>
</dbReference>
<dbReference type="EMBL" id="X13380">
    <property type="status" value="NOT_ANNOTATED_CDS"/>
    <property type="molecule type" value="Genomic_DNA"/>
</dbReference>
<dbReference type="PIR" id="A03403">
    <property type="entry name" value="BYEBT"/>
</dbReference>
<dbReference type="RefSeq" id="NP_462944.1">
    <property type="nucleotide sequence ID" value="NC_003197.2"/>
</dbReference>
<dbReference type="RefSeq" id="WP_000758711.1">
    <property type="nucleotide sequence ID" value="NC_003197.2"/>
</dbReference>
<dbReference type="PDB" id="1SBP">
    <property type="method" value="X-ray"/>
    <property type="resolution" value="1.70 A"/>
    <property type="chains" value="A=20-329"/>
</dbReference>
<dbReference type="PDBsum" id="1SBP"/>
<dbReference type="SMR" id="P02906"/>
<dbReference type="STRING" id="99287.STM4063"/>
<dbReference type="PaxDb" id="99287-STM4063"/>
<dbReference type="GeneID" id="1255590"/>
<dbReference type="KEGG" id="stm:STM4063"/>
<dbReference type="PATRIC" id="fig|99287.12.peg.4283"/>
<dbReference type="HOGENOM" id="CLU_055615_0_1_6"/>
<dbReference type="OMA" id="DKHGTRK"/>
<dbReference type="PhylomeDB" id="P02906"/>
<dbReference type="BioCyc" id="SENT99287:STM4063-MONOMER"/>
<dbReference type="EvolutionaryTrace" id="P02906"/>
<dbReference type="Proteomes" id="UP000001014">
    <property type="component" value="Chromosome"/>
</dbReference>
<dbReference type="GO" id="GO:0005615">
    <property type="term" value="C:extracellular space"/>
    <property type="evidence" value="ECO:0000318"/>
    <property type="project" value="GO_Central"/>
</dbReference>
<dbReference type="GO" id="GO:0030288">
    <property type="term" value="C:outer membrane-bounded periplasmic space"/>
    <property type="evidence" value="ECO:0000318"/>
    <property type="project" value="GO_Central"/>
</dbReference>
<dbReference type="GO" id="GO:0140104">
    <property type="term" value="F:molecular carrier activity"/>
    <property type="evidence" value="ECO:0007669"/>
    <property type="project" value="InterPro"/>
</dbReference>
<dbReference type="GO" id="GO:0043199">
    <property type="term" value="F:sulfate binding"/>
    <property type="evidence" value="ECO:0000318"/>
    <property type="project" value="GO_Central"/>
</dbReference>
<dbReference type="GO" id="GO:1902358">
    <property type="term" value="P:sulfate transmembrane transport"/>
    <property type="evidence" value="ECO:0007669"/>
    <property type="project" value="InterPro"/>
</dbReference>
<dbReference type="GO" id="GO:0006790">
    <property type="term" value="P:sulfur compound metabolic process"/>
    <property type="evidence" value="ECO:0000318"/>
    <property type="project" value="GO_Central"/>
</dbReference>
<dbReference type="CDD" id="cd01005">
    <property type="entry name" value="PBP2_CysP"/>
    <property type="match status" value="1"/>
</dbReference>
<dbReference type="Gene3D" id="3.40.190.10">
    <property type="entry name" value="Periplasmic binding protein-like II"/>
    <property type="match status" value="2"/>
</dbReference>
<dbReference type="InterPro" id="IPR000957">
    <property type="entry name" value="Sulphate/thiosulphate-bd_CS"/>
</dbReference>
<dbReference type="InterPro" id="IPR034408">
    <property type="entry name" value="Sulphate/thiosulphate_BS"/>
</dbReference>
<dbReference type="InterPro" id="IPR005669">
    <property type="entry name" value="Thiosulph/SO4-bd"/>
</dbReference>
<dbReference type="NCBIfam" id="TIGR00971">
    <property type="entry name" value="3a0106s03"/>
    <property type="match status" value="1"/>
</dbReference>
<dbReference type="NCBIfam" id="NF008022">
    <property type="entry name" value="PRK10752.1"/>
    <property type="match status" value="1"/>
</dbReference>
<dbReference type="NCBIfam" id="NF008106">
    <property type="entry name" value="PRK10852.1"/>
    <property type="match status" value="1"/>
</dbReference>
<dbReference type="PANTHER" id="PTHR30368">
    <property type="entry name" value="SULFATE-BINDING PROTEIN"/>
    <property type="match status" value="1"/>
</dbReference>
<dbReference type="PANTHER" id="PTHR30368:SF2">
    <property type="entry name" value="SULFATE-BINDING PROTEIN"/>
    <property type="match status" value="1"/>
</dbReference>
<dbReference type="Pfam" id="PF13531">
    <property type="entry name" value="SBP_bac_11"/>
    <property type="match status" value="1"/>
</dbReference>
<dbReference type="SUPFAM" id="SSF53850">
    <property type="entry name" value="Periplasmic binding protein-like II"/>
    <property type="match status" value="1"/>
</dbReference>
<dbReference type="PROSITE" id="PS00401">
    <property type="entry name" value="PROK_SULFATE_BIND_1"/>
    <property type="match status" value="1"/>
</dbReference>
<dbReference type="PROSITE" id="PS00757">
    <property type="entry name" value="PROK_SULFATE_BIND_2"/>
    <property type="match status" value="1"/>
</dbReference>
<organism>
    <name type="scientific">Salmonella typhimurium (strain LT2 / SGSC1412 / ATCC 700720)</name>
    <dbReference type="NCBI Taxonomy" id="99287"/>
    <lineage>
        <taxon>Bacteria</taxon>
        <taxon>Pseudomonadati</taxon>
        <taxon>Pseudomonadota</taxon>
        <taxon>Gammaproteobacteria</taxon>
        <taxon>Enterobacterales</taxon>
        <taxon>Enterobacteriaceae</taxon>
        <taxon>Salmonella</taxon>
    </lineage>
</organism>
<gene>
    <name type="primary">sbp</name>
    <name type="ordered locus">STM4063</name>
</gene>
<comment type="function">
    <text>This protein specifically binds sulfate and is involved in its transmembrane transport.</text>
</comment>
<comment type="subcellular location">
    <subcellularLocation>
        <location>Periplasm</location>
    </subcellularLocation>
</comment>
<comment type="similarity">
    <text evidence="2">Belongs to the prokaryotic sulfate-binding protein family.</text>
</comment>
<keyword id="KW-0002">3D-structure</keyword>
<keyword id="KW-0903">Direct protein sequencing</keyword>
<keyword id="KW-0574">Periplasm</keyword>
<keyword id="KW-1185">Reference proteome</keyword>
<keyword id="KW-0732">Signal</keyword>
<keyword id="KW-0764">Sulfate transport</keyword>
<keyword id="KW-0813">Transport</keyword>
<name>SUBI_SALTY</name>
<protein>
    <recommendedName>
        <fullName>Sulfate-binding protein</fullName>
    </recommendedName>
</protein>
<evidence type="ECO:0000269" key="1">
    <source>
    </source>
</evidence>
<evidence type="ECO:0000305" key="2"/>
<evidence type="ECO:0007829" key="3">
    <source>
        <dbReference type="PDB" id="1SBP"/>
    </source>
</evidence>
<accession>P02906</accession>
<reference key="1">
    <citation type="journal article" date="2001" name="Nature">
        <title>Complete genome sequence of Salmonella enterica serovar Typhimurium LT2.</title>
        <authorList>
            <person name="McClelland M."/>
            <person name="Sanderson K.E."/>
            <person name="Spieth J."/>
            <person name="Clifton S.W."/>
            <person name="Latreille P."/>
            <person name="Courtney L."/>
            <person name="Porwollik S."/>
            <person name="Ali J."/>
            <person name="Dante M."/>
            <person name="Du F."/>
            <person name="Hou S."/>
            <person name="Layman D."/>
            <person name="Leonard S."/>
            <person name="Nguyen C."/>
            <person name="Scott K."/>
            <person name="Holmes A."/>
            <person name="Grewal N."/>
            <person name="Mulvaney E."/>
            <person name="Ryan E."/>
            <person name="Sun H."/>
            <person name="Florea L."/>
            <person name="Miller W."/>
            <person name="Stoneking T."/>
            <person name="Nhan M."/>
            <person name="Waterston R."/>
            <person name="Wilson R.K."/>
        </authorList>
    </citation>
    <scope>NUCLEOTIDE SEQUENCE [LARGE SCALE GENOMIC DNA]</scope>
    <source>
        <strain>LT2 / SGSC1412 / ATCC 700720</strain>
    </source>
</reference>
<reference key="2">
    <citation type="journal article" date="1980" name="J. Biol. Chem.">
        <title>Amino acid sequence of the sulfate-binding protein from Salmonella typhimurium LT2.</title>
        <authorList>
            <person name="Isihara H."/>
            <person name="Hogg R.W."/>
        </authorList>
    </citation>
    <scope>PROTEIN SEQUENCE OF 20-329</scope>
    <source>
        <strain>LT2</strain>
    </source>
</reference>
<reference key="3">
    <citation type="journal article" date="1989" name="Mol. Microbiol.">
        <title>Isolation, molecular characterization and expression of the ushB gene of Salmonella typhimurium which encodes a membrane-bound UDP-sugar hydrolase.</title>
        <authorList>
            <person name="Garrett A.R."/>
            <person name="Johnson L.A."/>
            <person name="Beacham I.R."/>
        </authorList>
    </citation>
    <scope>NUCLEOTIDE SEQUENCE [GENOMIC DNA] OF 246-329</scope>
    <source>
        <strain>LT2</strain>
    </source>
</reference>
<reference key="4">
    <citation type="journal article" date="1985" name="Nature">
        <title>Sulphate sequestered in the sulphate-binding protein of Salmonella typhimurium is bound solely by hydrogen bonds.</title>
        <authorList>
            <person name="Pflugrath J.W."/>
            <person name="Quiocho F.A."/>
        </authorList>
    </citation>
    <scope>X-RAY CRYSTALLOGRAPHY (2.0 ANGSTROMS)</scope>
</reference>
<reference key="5">
    <citation type="journal article" date="1988" name="J. Mol. Biol.">
        <title>The 2-A resolution structure of the sulfate-binding protein involved in active transport in Salmonella typhimurium.</title>
        <authorList>
            <person name="Pflugrath J.W."/>
            <person name="Quiocho F.A."/>
        </authorList>
    </citation>
    <scope>X-RAY CRYSTALLOGRAPHY (2.0 ANGSTROMS)</scope>
</reference>
<reference key="6">
    <citation type="journal article" date="1993" name="Protein Sci.">
        <title>Dominant role of local dipoles in stabilizing uncompensated charges on a sulfate sequestered in a periplasmic active transport protein.</title>
        <authorList>
            <person name="He J.J."/>
            <person name="Quiocho F.A."/>
        </authorList>
    </citation>
    <scope>X-RAY CRYSTALLOGRAPHY (1.7 ANGSTROMS)</scope>
</reference>
<sequence>MKKWGVGFTLLLASTSILAKDIQLLNVSYDPTRELYEQYNKAFSAHWKQETGDNVVIRQSHGGSGKQATSVINGIEADVVTLALAYDVDAIAERGRIDKNWIKRLPDNSAPYTSTIVFLVRKGNPKQIHDWNDLIKPGVSVITPNPKSSGGARWNYLAAWGYALHHNNNDQAKAQDFVKALFKNVEVLDSGARGSTNTFVERGIGDVLIAWENEALLATNELGKDKFEIVTPSESILAEPTVSVVDKVVEKKDTKAVAEAYLKYLYSPEGQEIAAKNFYRPRDADVAKKYDDAFPKLKLFTIDEVFGGWAKAQKDHFANGGTFDQISKR</sequence>